<proteinExistence type="inferred from homology"/>
<accession>Q8DWL9</accession>
<gene>
    <name evidence="1" type="primary">plsX</name>
    <name type="ordered locus">SMU_26</name>
</gene>
<feature type="chain" id="PRO_0000189945" description="Phosphate acyltransferase">
    <location>
        <begin position="1"/>
        <end position="332"/>
    </location>
</feature>
<evidence type="ECO:0000255" key="1">
    <source>
        <dbReference type="HAMAP-Rule" id="MF_00019"/>
    </source>
</evidence>
<name>PLSX_STRMU</name>
<organism>
    <name type="scientific">Streptococcus mutans serotype c (strain ATCC 700610 / UA159)</name>
    <dbReference type="NCBI Taxonomy" id="210007"/>
    <lineage>
        <taxon>Bacteria</taxon>
        <taxon>Bacillati</taxon>
        <taxon>Bacillota</taxon>
        <taxon>Bacilli</taxon>
        <taxon>Lactobacillales</taxon>
        <taxon>Streptococcaceae</taxon>
        <taxon>Streptococcus</taxon>
    </lineage>
</organism>
<sequence>MKKIAVDAMGGDNAPQAIVEGVNQALADFSDIEIQLYGDEAKIKTYLKANDRVSIIHTDEKINSDDEPVKAIRKKKQASMVLGAQAVKDGKADAVLSAGNTGALLAAGLLVVGRIKNIDRPGLMSSLPTIDGKGFNMLDLGANAENTAHHLHQYAILGSFYAKNVRGVAHPRIGLLNNGTETTKGDPLRKETFALLAADETLNFIGNVEARDLMNSVADVVVTDGFTGNAVLKSIEGTALGIMEQLKTSIKQAGLRAKLGALLLKNSLYDLKDSLDYSGAGGAVLFGLKAPVVKCHGSSDAKSVYYTIKQIRIMLETDVVGQLVEEFSNRGD</sequence>
<dbReference type="EC" id="2.3.1.274" evidence="1"/>
<dbReference type="EMBL" id="AE014133">
    <property type="protein sequence ID" value="AAN57815.1"/>
    <property type="molecule type" value="Genomic_DNA"/>
</dbReference>
<dbReference type="RefSeq" id="NP_720509.1">
    <property type="nucleotide sequence ID" value="NC_004350.2"/>
</dbReference>
<dbReference type="RefSeq" id="WP_002263136.1">
    <property type="nucleotide sequence ID" value="NC_004350.2"/>
</dbReference>
<dbReference type="SMR" id="Q8DWL9"/>
<dbReference type="STRING" id="210007.SMU_26"/>
<dbReference type="KEGG" id="smu:SMU_26"/>
<dbReference type="PATRIC" id="fig|210007.7.peg.21"/>
<dbReference type="eggNOG" id="COG0416">
    <property type="taxonomic scope" value="Bacteria"/>
</dbReference>
<dbReference type="HOGENOM" id="CLU_039379_1_1_9"/>
<dbReference type="OrthoDB" id="9806408at2"/>
<dbReference type="PhylomeDB" id="Q8DWL9"/>
<dbReference type="UniPathway" id="UPA00085"/>
<dbReference type="Proteomes" id="UP000002512">
    <property type="component" value="Chromosome"/>
</dbReference>
<dbReference type="GO" id="GO:0005737">
    <property type="term" value="C:cytoplasm"/>
    <property type="evidence" value="ECO:0007669"/>
    <property type="project" value="UniProtKB-SubCell"/>
</dbReference>
<dbReference type="GO" id="GO:0043811">
    <property type="term" value="F:phosphate:acyl-[acyl carrier protein] acyltransferase activity"/>
    <property type="evidence" value="ECO:0007669"/>
    <property type="project" value="UniProtKB-UniRule"/>
</dbReference>
<dbReference type="GO" id="GO:0006633">
    <property type="term" value="P:fatty acid biosynthetic process"/>
    <property type="evidence" value="ECO:0007669"/>
    <property type="project" value="UniProtKB-UniRule"/>
</dbReference>
<dbReference type="GO" id="GO:0008654">
    <property type="term" value="P:phospholipid biosynthetic process"/>
    <property type="evidence" value="ECO:0007669"/>
    <property type="project" value="UniProtKB-KW"/>
</dbReference>
<dbReference type="Gene3D" id="3.40.718.10">
    <property type="entry name" value="Isopropylmalate Dehydrogenase"/>
    <property type="match status" value="1"/>
</dbReference>
<dbReference type="HAMAP" id="MF_00019">
    <property type="entry name" value="PlsX"/>
    <property type="match status" value="1"/>
</dbReference>
<dbReference type="InterPro" id="IPR003664">
    <property type="entry name" value="FA_synthesis"/>
</dbReference>
<dbReference type="InterPro" id="IPR012281">
    <property type="entry name" value="Phospholipid_synth_PlsX-like"/>
</dbReference>
<dbReference type="NCBIfam" id="TIGR00182">
    <property type="entry name" value="plsX"/>
    <property type="match status" value="1"/>
</dbReference>
<dbReference type="PANTHER" id="PTHR30100">
    <property type="entry name" value="FATTY ACID/PHOSPHOLIPID SYNTHESIS PROTEIN PLSX"/>
    <property type="match status" value="1"/>
</dbReference>
<dbReference type="PANTHER" id="PTHR30100:SF1">
    <property type="entry name" value="PHOSPHATE ACYLTRANSFERASE"/>
    <property type="match status" value="1"/>
</dbReference>
<dbReference type="Pfam" id="PF02504">
    <property type="entry name" value="FA_synthesis"/>
    <property type="match status" value="1"/>
</dbReference>
<dbReference type="PIRSF" id="PIRSF002465">
    <property type="entry name" value="Phsphlp_syn_PlsX"/>
    <property type="match status" value="1"/>
</dbReference>
<dbReference type="SUPFAM" id="SSF53659">
    <property type="entry name" value="Isocitrate/Isopropylmalate dehydrogenase-like"/>
    <property type="match status" value="1"/>
</dbReference>
<keyword id="KW-0963">Cytoplasm</keyword>
<keyword id="KW-0444">Lipid biosynthesis</keyword>
<keyword id="KW-0443">Lipid metabolism</keyword>
<keyword id="KW-0594">Phospholipid biosynthesis</keyword>
<keyword id="KW-1208">Phospholipid metabolism</keyword>
<keyword id="KW-1185">Reference proteome</keyword>
<keyword id="KW-0808">Transferase</keyword>
<protein>
    <recommendedName>
        <fullName evidence="1">Phosphate acyltransferase</fullName>
        <ecNumber evidence="1">2.3.1.274</ecNumber>
    </recommendedName>
    <alternativeName>
        <fullName evidence="1">Acyl-ACP phosphotransacylase</fullName>
    </alternativeName>
    <alternativeName>
        <fullName evidence="1">Acyl-[acyl-carrier-protein]--phosphate acyltransferase</fullName>
    </alternativeName>
    <alternativeName>
        <fullName evidence="1">Phosphate-acyl-ACP acyltransferase</fullName>
    </alternativeName>
</protein>
<comment type="function">
    <text evidence="1">Catalyzes the reversible formation of acyl-phosphate (acyl-PO(4)) from acyl-[acyl-carrier-protein] (acyl-ACP). This enzyme utilizes acyl-ACP as fatty acyl donor, but not acyl-CoA.</text>
</comment>
<comment type="catalytic activity">
    <reaction evidence="1">
        <text>a fatty acyl-[ACP] + phosphate = an acyl phosphate + holo-[ACP]</text>
        <dbReference type="Rhea" id="RHEA:42292"/>
        <dbReference type="Rhea" id="RHEA-COMP:9685"/>
        <dbReference type="Rhea" id="RHEA-COMP:14125"/>
        <dbReference type="ChEBI" id="CHEBI:43474"/>
        <dbReference type="ChEBI" id="CHEBI:59918"/>
        <dbReference type="ChEBI" id="CHEBI:64479"/>
        <dbReference type="ChEBI" id="CHEBI:138651"/>
        <dbReference type="EC" id="2.3.1.274"/>
    </reaction>
</comment>
<comment type="pathway">
    <text evidence="1">Lipid metabolism; phospholipid metabolism.</text>
</comment>
<comment type="subunit">
    <text evidence="1">Homodimer. Probably interacts with PlsY.</text>
</comment>
<comment type="subcellular location">
    <subcellularLocation>
        <location evidence="1">Cytoplasm</location>
    </subcellularLocation>
    <text evidence="1">Associated with the membrane possibly through PlsY.</text>
</comment>
<comment type="similarity">
    <text evidence="1">Belongs to the PlsX family.</text>
</comment>
<reference key="1">
    <citation type="journal article" date="2002" name="Proc. Natl. Acad. Sci. U.S.A.">
        <title>Genome sequence of Streptococcus mutans UA159, a cariogenic dental pathogen.</title>
        <authorList>
            <person name="Ajdic D.J."/>
            <person name="McShan W.M."/>
            <person name="McLaughlin R.E."/>
            <person name="Savic G."/>
            <person name="Chang J."/>
            <person name="Carson M.B."/>
            <person name="Primeaux C."/>
            <person name="Tian R."/>
            <person name="Kenton S."/>
            <person name="Jia H.G."/>
            <person name="Lin S.P."/>
            <person name="Qian Y."/>
            <person name="Li S."/>
            <person name="Zhu H."/>
            <person name="Najar F.Z."/>
            <person name="Lai H."/>
            <person name="White J."/>
            <person name="Roe B.A."/>
            <person name="Ferretti J.J."/>
        </authorList>
    </citation>
    <scope>NUCLEOTIDE SEQUENCE [LARGE SCALE GENOMIC DNA]</scope>
    <source>
        <strain>ATCC 700610 / UA159</strain>
    </source>
</reference>